<gene>
    <name type="primary">eptC</name>
    <name type="synonym">cptA</name>
    <name type="synonym">yijP</name>
    <name type="ordered locus">b3955</name>
    <name type="ordered locus">JW3927</name>
</gene>
<name>EPTC_ECOLI</name>
<dbReference type="EC" id="2.7.-.-"/>
<dbReference type="EMBL" id="U00006">
    <property type="protein sequence ID" value="AAC43061.1"/>
    <property type="molecule type" value="Genomic_DNA"/>
</dbReference>
<dbReference type="EMBL" id="U00096">
    <property type="protein sequence ID" value="AAC76937.1"/>
    <property type="molecule type" value="Genomic_DNA"/>
</dbReference>
<dbReference type="EMBL" id="AP009048">
    <property type="protein sequence ID" value="BAE77356.1"/>
    <property type="molecule type" value="Genomic_DNA"/>
</dbReference>
<dbReference type="PIR" id="F65202">
    <property type="entry name" value="F65202"/>
</dbReference>
<dbReference type="RefSeq" id="NP_418390.1">
    <property type="nucleotide sequence ID" value="NC_000913.3"/>
</dbReference>
<dbReference type="RefSeq" id="WP_000556306.1">
    <property type="nucleotide sequence ID" value="NZ_SSZK01000014.1"/>
</dbReference>
<dbReference type="PDB" id="5ZZU">
    <property type="method" value="X-ray"/>
    <property type="resolution" value="2.10 A"/>
    <property type="chains" value="A/B/C=205-577"/>
</dbReference>
<dbReference type="PDB" id="6A82">
    <property type="method" value="X-ray"/>
    <property type="resolution" value="2.10 A"/>
    <property type="chains" value="A/B/C=205-577"/>
</dbReference>
<dbReference type="PDB" id="6A83">
    <property type="method" value="X-ray"/>
    <property type="resolution" value="2.60 A"/>
    <property type="chains" value="A=205-577"/>
</dbReference>
<dbReference type="PDBsum" id="5ZZU"/>
<dbReference type="PDBsum" id="6A82"/>
<dbReference type="PDBsum" id="6A83"/>
<dbReference type="SMR" id="P0CB39"/>
<dbReference type="BioGRID" id="4260945">
    <property type="interactions" value="18"/>
</dbReference>
<dbReference type="FunCoup" id="P0CB39">
    <property type="interactions" value="63"/>
</dbReference>
<dbReference type="IntAct" id="P0CB39">
    <property type="interactions" value="2"/>
</dbReference>
<dbReference type="STRING" id="511145.b3955"/>
<dbReference type="jPOST" id="P0CB39"/>
<dbReference type="PaxDb" id="511145-b3955"/>
<dbReference type="EnsemblBacteria" id="AAC76937">
    <property type="protein sequence ID" value="AAC76937"/>
    <property type="gene ID" value="b3955"/>
</dbReference>
<dbReference type="GeneID" id="948458"/>
<dbReference type="KEGG" id="ecj:JW3927"/>
<dbReference type="KEGG" id="eco:b3955"/>
<dbReference type="KEGG" id="ecoc:C3026_21370"/>
<dbReference type="PATRIC" id="fig|1411691.4.peg.2750"/>
<dbReference type="EchoBASE" id="EB1858"/>
<dbReference type="eggNOG" id="COG2194">
    <property type="taxonomic scope" value="Bacteria"/>
</dbReference>
<dbReference type="HOGENOM" id="CLU_018534_3_3_6"/>
<dbReference type="InParanoid" id="P0CB39"/>
<dbReference type="OMA" id="PMYTIPF"/>
<dbReference type="OrthoDB" id="9786870at2"/>
<dbReference type="PhylomeDB" id="P0CB39"/>
<dbReference type="BioCyc" id="EcoCyc:EG11914-MONOMER"/>
<dbReference type="BioCyc" id="MetaCyc:EG11914-MONOMER"/>
<dbReference type="UniPathway" id="UPA00958"/>
<dbReference type="PRO" id="PR:P0CB39"/>
<dbReference type="Proteomes" id="UP000000625">
    <property type="component" value="Chromosome"/>
</dbReference>
<dbReference type="GO" id="GO:0005886">
    <property type="term" value="C:plasma membrane"/>
    <property type="evidence" value="ECO:0000314"/>
    <property type="project" value="EcoCyc"/>
</dbReference>
<dbReference type="GO" id="GO:0016776">
    <property type="term" value="F:phosphotransferase activity, phosphate group as acceptor"/>
    <property type="evidence" value="ECO:0000315"/>
    <property type="project" value="EcoCyc"/>
</dbReference>
<dbReference type="GO" id="GO:0009244">
    <property type="term" value="P:lipopolysaccharide core region biosynthetic process"/>
    <property type="evidence" value="ECO:0000315"/>
    <property type="project" value="EcoCyc"/>
</dbReference>
<dbReference type="CDD" id="cd16017">
    <property type="entry name" value="LptA"/>
    <property type="match status" value="1"/>
</dbReference>
<dbReference type="FunFam" id="3.40.720.10:FF:000016">
    <property type="entry name" value="Phosphoethanolamine transferase CptA"/>
    <property type="match status" value="1"/>
</dbReference>
<dbReference type="Gene3D" id="3.40.720.10">
    <property type="entry name" value="Alkaline Phosphatase, subunit A"/>
    <property type="match status" value="1"/>
</dbReference>
<dbReference type="InterPro" id="IPR017850">
    <property type="entry name" value="Alkaline_phosphatase_core_sf"/>
</dbReference>
<dbReference type="InterPro" id="IPR047787">
    <property type="entry name" value="EptC/CptA"/>
</dbReference>
<dbReference type="InterPro" id="IPR040423">
    <property type="entry name" value="PEA_transferase"/>
</dbReference>
<dbReference type="InterPro" id="IPR000917">
    <property type="entry name" value="Sulfatase_N"/>
</dbReference>
<dbReference type="NCBIfam" id="NF012179">
    <property type="entry name" value="CptA"/>
    <property type="match status" value="1"/>
</dbReference>
<dbReference type="NCBIfam" id="NF007933">
    <property type="entry name" value="PRK10649.1"/>
    <property type="match status" value="1"/>
</dbReference>
<dbReference type="PANTHER" id="PTHR30443">
    <property type="entry name" value="INNER MEMBRANE PROTEIN"/>
    <property type="match status" value="1"/>
</dbReference>
<dbReference type="PANTHER" id="PTHR30443:SF2">
    <property type="entry name" value="PHOSPHOETHANOLAMINE TRANSFERASE EPTC"/>
    <property type="match status" value="1"/>
</dbReference>
<dbReference type="Pfam" id="PF00884">
    <property type="entry name" value="Sulfatase"/>
    <property type="match status" value="1"/>
</dbReference>
<dbReference type="SUPFAM" id="SSF53649">
    <property type="entry name" value="Alkaline phosphatase-like"/>
    <property type="match status" value="1"/>
</dbReference>
<sequence length="577" mass="66610">MHSTEVQAKPLFSWKALGWALLYFWFFSTLLQAIIYISGYSGTNGIRDSLLFSSLWLIPVFLFPKRIKIIAAVIGVVLWAASLAALCYYVIYGQEFSQSVLFVMFETNTNEASEYLSQYFSLKIVLIALAYTAVAVLLWTRLRPVYIPKPWRYVVSFALLYGLILHPIAMNTFIKNKPFEKTLDNLASRMEPAAPWQFLTGYYQYRQQLNSLTKLLNENNALPPLANFKDESGNEPRTLVLVIGESTQRGRMSLYGYPRETTPELDALHKTDPNLTVFNNVVTSRPYTIEILQQALTFANEKNPDLYLTQPSLMNMMKQAGYKTFWITNQQTMTARNTMLTVFSRQTDKQYYMNQQRTQSAREYDTNVLKPFQEVLNDPAPKKLIIVHLLGTHIKYKYRYPENQGKFDGNTDHVPPGLNAEELESYNDYDNANLYNDHVVASLIKDFKAANPNGFLVYFSDHGEEVYDTPPHKTQGRNEDNPTRHMYTIPFLLWTSEKWQATHPRDFSQDVDRKYSLAELIHTWSDLAGLSYDGYDPTRSVVNPQFKETTRWIGNPYKKNALIDYDTLPYGDQVGNQ</sequence>
<reference key="1">
    <citation type="journal article" date="1993" name="Nucleic Acids Res.">
        <title>Analysis of the Escherichia coli genome. IV. DNA sequence of the region from 89.2 to 92.8 minutes.</title>
        <authorList>
            <person name="Blattner F.R."/>
            <person name="Burland V.D."/>
            <person name="Plunkett G. III"/>
            <person name="Sofia H.J."/>
            <person name="Daniels D.L."/>
        </authorList>
    </citation>
    <scope>NUCLEOTIDE SEQUENCE [LARGE SCALE GENOMIC DNA]</scope>
    <source>
        <strain>K12 / MG1655 / ATCC 47076</strain>
    </source>
</reference>
<reference key="2">
    <citation type="journal article" date="1997" name="Science">
        <title>The complete genome sequence of Escherichia coli K-12.</title>
        <authorList>
            <person name="Blattner F.R."/>
            <person name="Plunkett G. III"/>
            <person name="Bloch C.A."/>
            <person name="Perna N.T."/>
            <person name="Burland V."/>
            <person name="Riley M."/>
            <person name="Collado-Vides J."/>
            <person name="Glasner J.D."/>
            <person name="Rode C.K."/>
            <person name="Mayhew G.F."/>
            <person name="Gregor J."/>
            <person name="Davis N.W."/>
            <person name="Kirkpatrick H.A."/>
            <person name="Goeden M.A."/>
            <person name="Rose D.J."/>
            <person name="Mau B."/>
            <person name="Shao Y."/>
        </authorList>
    </citation>
    <scope>NUCLEOTIDE SEQUENCE [LARGE SCALE GENOMIC DNA]</scope>
    <source>
        <strain>K12 / MG1655 / ATCC 47076</strain>
    </source>
</reference>
<reference key="3">
    <citation type="journal article" date="2006" name="Mol. Syst. Biol.">
        <title>Highly accurate genome sequences of Escherichia coli K-12 strains MG1655 and W3110.</title>
        <authorList>
            <person name="Hayashi K."/>
            <person name="Morooka N."/>
            <person name="Yamamoto Y."/>
            <person name="Fujita K."/>
            <person name="Isono K."/>
            <person name="Choi S."/>
            <person name="Ohtsubo E."/>
            <person name="Baba T."/>
            <person name="Wanner B.L."/>
            <person name="Mori H."/>
            <person name="Horiuchi T."/>
        </authorList>
    </citation>
    <scope>NUCLEOTIDE SEQUENCE [LARGE SCALE GENOMIC DNA]</scope>
    <source>
        <strain>K12 / W3110 / ATCC 27325 / DSM 5911</strain>
    </source>
</reference>
<reference key="4">
    <citation type="journal article" date="2005" name="J. Biol. Chem.">
        <title>Protein complexes of the Escherichia coli cell envelope.</title>
        <authorList>
            <person name="Stenberg F."/>
            <person name="Chovanec P."/>
            <person name="Maslen S.L."/>
            <person name="Robinson C.V."/>
            <person name="Ilag L."/>
            <person name="von Heijne G."/>
            <person name="Daley D.O."/>
        </authorList>
    </citation>
    <scope>SUBUNIT</scope>
    <scope>SUBCELLULAR LOCATION</scope>
    <source>
        <strain>BL21-DE3</strain>
    </source>
</reference>
<accession>P0CB39</accession>
<accession>P32678</accession>
<accession>Q2M8Q0</accession>
<accession>Q9S4U6</accession>
<protein>
    <recommendedName>
        <fullName>Phosphoethanolamine transferase EptC</fullName>
        <ecNumber>2.7.-.-</ecNumber>
    </recommendedName>
</protein>
<feature type="chain" id="PRO_0000209150" description="Phosphoethanolamine transferase EptC">
    <location>
        <begin position="1"/>
        <end position="577"/>
    </location>
</feature>
<feature type="transmembrane region" description="Helical" evidence="2">
    <location>
        <begin position="17"/>
        <end position="37"/>
    </location>
</feature>
<feature type="transmembrane region" description="Helical" evidence="2">
    <location>
        <begin position="44"/>
        <end position="64"/>
    </location>
</feature>
<feature type="transmembrane region" description="Helical" evidence="2">
    <location>
        <begin position="69"/>
        <end position="89"/>
    </location>
</feature>
<feature type="transmembrane region" description="Helical" evidence="2">
    <location>
        <begin position="119"/>
        <end position="139"/>
    </location>
</feature>
<feature type="transmembrane region" description="Helical" evidence="2">
    <location>
        <begin position="154"/>
        <end position="174"/>
    </location>
</feature>
<feature type="strand" evidence="5">
    <location>
        <begin position="237"/>
        <end position="244"/>
    </location>
</feature>
<feature type="helix" evidence="6">
    <location>
        <begin position="249"/>
        <end position="251"/>
    </location>
</feature>
<feature type="helix" evidence="5">
    <location>
        <begin position="253"/>
        <end position="255"/>
    </location>
</feature>
<feature type="helix" evidence="5">
    <location>
        <begin position="263"/>
        <end position="271"/>
    </location>
</feature>
<feature type="strand" evidence="5">
    <location>
        <begin position="275"/>
        <end position="277"/>
    </location>
</feature>
<feature type="strand" evidence="5">
    <location>
        <begin position="279"/>
        <end position="282"/>
    </location>
</feature>
<feature type="helix" evidence="5">
    <location>
        <begin position="288"/>
        <end position="295"/>
    </location>
</feature>
<feature type="strand" evidence="5">
    <location>
        <begin position="301"/>
        <end position="303"/>
    </location>
</feature>
<feature type="helix" evidence="5">
    <location>
        <begin position="306"/>
        <end position="309"/>
    </location>
</feature>
<feature type="helix" evidence="5">
    <location>
        <begin position="313"/>
        <end position="319"/>
    </location>
</feature>
<feature type="strand" evidence="5">
    <location>
        <begin position="323"/>
        <end position="328"/>
    </location>
</feature>
<feature type="helix" evidence="5">
    <location>
        <begin position="339"/>
        <end position="345"/>
    </location>
</feature>
<feature type="strand" evidence="5">
    <location>
        <begin position="347"/>
        <end position="352"/>
    </location>
</feature>
<feature type="strand" evidence="5">
    <location>
        <begin position="357"/>
        <end position="359"/>
    </location>
</feature>
<feature type="helix" evidence="5">
    <location>
        <begin position="365"/>
        <end position="368"/>
    </location>
</feature>
<feature type="helix" evidence="5">
    <location>
        <begin position="369"/>
        <end position="377"/>
    </location>
</feature>
<feature type="strand" evidence="5">
    <location>
        <begin position="381"/>
        <end position="388"/>
    </location>
</feature>
<feature type="helix" evidence="5">
    <location>
        <begin position="396"/>
        <end position="399"/>
    </location>
</feature>
<feature type="helix" evidence="5">
    <location>
        <begin position="402"/>
        <end position="404"/>
    </location>
</feature>
<feature type="turn" evidence="5">
    <location>
        <begin position="406"/>
        <end position="409"/>
    </location>
</feature>
<feature type="helix" evidence="5">
    <location>
        <begin position="420"/>
        <end position="449"/>
    </location>
</feature>
<feature type="strand" evidence="5">
    <location>
        <begin position="453"/>
        <end position="461"/>
    </location>
</feature>
<feature type="strand" evidence="5">
    <location>
        <begin position="465"/>
        <end position="467"/>
    </location>
</feature>
<feature type="helix" evidence="5">
    <location>
        <begin position="484"/>
        <end position="486"/>
    </location>
</feature>
<feature type="strand" evidence="5">
    <location>
        <begin position="491"/>
        <end position="495"/>
    </location>
</feature>
<feature type="helix" evidence="5">
    <location>
        <begin position="497"/>
        <end position="502"/>
    </location>
</feature>
<feature type="turn" evidence="5">
    <location>
        <begin position="508"/>
        <end position="512"/>
    </location>
</feature>
<feature type="helix" evidence="5">
    <location>
        <begin position="517"/>
        <end position="519"/>
    </location>
</feature>
<feature type="helix" evidence="5">
    <location>
        <begin position="520"/>
        <end position="528"/>
    </location>
</feature>
<feature type="helix" evidence="5">
    <location>
        <begin position="537"/>
        <end position="539"/>
    </location>
</feature>
<feature type="strand" evidence="5">
    <location>
        <begin position="552"/>
        <end position="554"/>
    </location>
</feature>
<feature type="helix" evidence="5">
    <location>
        <begin position="565"/>
        <end position="567"/>
    </location>
</feature>
<comment type="function">
    <text evidence="1">Catalyzes the addition of a phosphoethanolamine moiety to the outer membrane lipopolysaccharide core.</text>
</comment>
<comment type="pathway">
    <text>Bacterial outer membrane biogenesis; LPS core biosynthesis.</text>
</comment>
<comment type="subunit">
    <text evidence="3">Forms a complex with an unidentified protein of approximately 36 kDa.</text>
</comment>
<comment type="subcellular location">
    <subcellularLocation>
        <location evidence="3">Cell inner membrane</location>
        <topology evidence="3">Multi-pass membrane protein</topology>
    </subcellularLocation>
</comment>
<comment type="similarity">
    <text evidence="4">Belongs to the phosphoethanolamine transferase family. EptC/CptA subfamily.</text>
</comment>
<keyword id="KW-0002">3D-structure</keyword>
<keyword id="KW-0997">Cell inner membrane</keyword>
<keyword id="KW-1003">Cell membrane</keyword>
<keyword id="KW-0444">Lipid biosynthesis</keyword>
<keyword id="KW-0443">Lipid metabolism</keyword>
<keyword id="KW-0448">Lipopolysaccharide biosynthesis</keyword>
<keyword id="KW-0472">Membrane</keyword>
<keyword id="KW-1185">Reference proteome</keyword>
<keyword id="KW-0808">Transferase</keyword>
<keyword id="KW-0812">Transmembrane</keyword>
<keyword id="KW-1133">Transmembrane helix</keyword>
<organism>
    <name type="scientific">Escherichia coli (strain K12)</name>
    <dbReference type="NCBI Taxonomy" id="83333"/>
    <lineage>
        <taxon>Bacteria</taxon>
        <taxon>Pseudomonadati</taxon>
        <taxon>Pseudomonadota</taxon>
        <taxon>Gammaproteobacteria</taxon>
        <taxon>Enterobacterales</taxon>
        <taxon>Enterobacteriaceae</taxon>
        <taxon>Escherichia</taxon>
    </lineage>
</organism>
<proteinExistence type="evidence at protein level"/>
<evidence type="ECO:0000250" key="1"/>
<evidence type="ECO:0000255" key="2"/>
<evidence type="ECO:0000269" key="3">
    <source>
    </source>
</evidence>
<evidence type="ECO:0000305" key="4"/>
<evidence type="ECO:0007829" key="5">
    <source>
        <dbReference type="PDB" id="5ZZU"/>
    </source>
</evidence>
<evidence type="ECO:0007829" key="6">
    <source>
        <dbReference type="PDB" id="6A83"/>
    </source>
</evidence>